<sequence>MEQYKRILLKEFDSRQKVITELTNLEAILNLPKGTELYISDIHGEFEAFDYILRSCAGILNEKIKDCFGDSLSQDDKNRLSALVSYPELVLKEGNKSRDWYKDTIPQLLSLLAFAAAKYSRSKLRKALPPQYAYIIEELVYSDTALADKKSYFENILSYVIELREAVPFILGISGSIRRLLIDHLHVVGDIFDRGAGSPQVMDELLHFHSLDIQWGNHDIIWMGGFFGSKACMLNALRIAARYGYLWDIEKAYGLNLRALTLFADRTYKTNPKFRPILGHREVDFTAEEILQLEKVHQALTIIQFKLESQLIKRRPEFQMEDQVTLDKIDYWEECLTIDDKKHPLINTCFQTIDPTNPSELSPEEAQAVDSMLASFQGSLKLAEHINLLMKKGSMYKIYNQHLLFHGCIPLEPSGEFQPLMIHQAHYVGRKLLDFFEYHIRQAAKNKEIGDDFSTDLIWYCWRGKLSPLFGKDKMTTLERYFIEDKETHKEVENSYFSYRNSEKICQLILEEFGLFSQESRMVNGHTPVKTGKGESPIRGGGLLFVIDGGLCEAYQEKTGTAGYSLLNNSYGFQLVTHQPFQNAQKVVEAPFAQTSLKKVIENVEQRTLIKSTSIGQILMAQQQELFALLHEFYDF</sequence>
<proteinExistence type="inferred from homology"/>
<comment type="catalytic activity">
    <reaction evidence="1">
        <text>beta-D-fructose 1,6-bisphosphate + H2O = beta-D-fructose 6-phosphate + phosphate</text>
        <dbReference type="Rhea" id="RHEA:11064"/>
        <dbReference type="ChEBI" id="CHEBI:15377"/>
        <dbReference type="ChEBI" id="CHEBI:32966"/>
        <dbReference type="ChEBI" id="CHEBI:43474"/>
        <dbReference type="ChEBI" id="CHEBI:57634"/>
        <dbReference type="EC" id="3.1.3.11"/>
    </reaction>
</comment>
<comment type="cofactor">
    <cofactor evidence="1">
        <name>Mn(2+)</name>
        <dbReference type="ChEBI" id="CHEBI:29035"/>
    </cofactor>
</comment>
<comment type="pathway">
    <text evidence="1">Carbohydrate biosynthesis; gluconeogenesis.</text>
</comment>
<comment type="similarity">
    <text evidence="1">Belongs to the FBPase class 3 family.</text>
</comment>
<feature type="chain" id="PRO_0000363115" description="Fructose-1,6-bisphosphatase class 3">
    <location>
        <begin position="1"/>
        <end position="636"/>
    </location>
</feature>
<organism>
    <name type="scientific">Streptococcus gordonii (strain Challis / ATCC 35105 / BCRC 15272 / CH1 / DL1 / V288)</name>
    <dbReference type="NCBI Taxonomy" id="467705"/>
    <lineage>
        <taxon>Bacteria</taxon>
        <taxon>Bacillati</taxon>
        <taxon>Bacillota</taxon>
        <taxon>Bacilli</taxon>
        <taxon>Lactobacillales</taxon>
        <taxon>Streptococcaceae</taxon>
        <taxon>Streptococcus</taxon>
    </lineage>
</organism>
<evidence type="ECO:0000255" key="1">
    <source>
        <dbReference type="HAMAP-Rule" id="MF_01854"/>
    </source>
</evidence>
<dbReference type="EC" id="3.1.3.11" evidence="1"/>
<dbReference type="EMBL" id="CP000725">
    <property type="protein sequence ID" value="ABV09406.1"/>
    <property type="molecule type" value="Genomic_DNA"/>
</dbReference>
<dbReference type="RefSeq" id="WP_012000272.1">
    <property type="nucleotide sequence ID" value="NC_009785.1"/>
</dbReference>
<dbReference type="STRING" id="467705.SGO_0813"/>
<dbReference type="KEGG" id="sgo:SGO_0813"/>
<dbReference type="eggNOG" id="COG3855">
    <property type="taxonomic scope" value="Bacteria"/>
</dbReference>
<dbReference type="HOGENOM" id="CLU_028392_2_0_9"/>
<dbReference type="UniPathway" id="UPA00138"/>
<dbReference type="Proteomes" id="UP000001131">
    <property type="component" value="Chromosome"/>
</dbReference>
<dbReference type="GO" id="GO:0042132">
    <property type="term" value="F:fructose 1,6-bisphosphate 1-phosphatase activity"/>
    <property type="evidence" value="ECO:0007669"/>
    <property type="project" value="UniProtKB-UniRule"/>
</dbReference>
<dbReference type="GO" id="GO:0006094">
    <property type="term" value="P:gluconeogenesis"/>
    <property type="evidence" value="ECO:0007669"/>
    <property type="project" value="UniProtKB-UniRule"/>
</dbReference>
<dbReference type="Gene3D" id="3.60.21.10">
    <property type="match status" value="1"/>
</dbReference>
<dbReference type="HAMAP" id="MF_01854">
    <property type="entry name" value="FBPase_class3"/>
    <property type="match status" value="1"/>
</dbReference>
<dbReference type="InterPro" id="IPR009164">
    <property type="entry name" value="FBPtase_class3"/>
</dbReference>
<dbReference type="InterPro" id="IPR029052">
    <property type="entry name" value="Metallo-depent_PP-like"/>
</dbReference>
<dbReference type="Pfam" id="PF06874">
    <property type="entry name" value="FBPase_2"/>
    <property type="match status" value="1"/>
</dbReference>
<dbReference type="SUPFAM" id="SSF56300">
    <property type="entry name" value="Metallo-dependent phosphatases"/>
    <property type="match status" value="2"/>
</dbReference>
<gene>
    <name evidence="1" type="primary">fbp</name>
    <name type="ordered locus">SGO_0813</name>
</gene>
<name>F16PC_STRGC</name>
<reference key="1">
    <citation type="journal article" date="2007" name="J. Bacteriol.">
        <title>Genome-wide transcriptional changes in Streptococcus gordonii in response to competence signaling peptide.</title>
        <authorList>
            <person name="Vickerman M.M."/>
            <person name="Iobst S."/>
            <person name="Jesionowski A.M."/>
            <person name="Gill S.R."/>
        </authorList>
    </citation>
    <scope>NUCLEOTIDE SEQUENCE [LARGE SCALE GENOMIC DNA]</scope>
    <source>
        <strain>Challis / ATCC 35105 / BCRC 15272 / CH1 / DL1 / V288</strain>
    </source>
</reference>
<accession>A8AWF2</accession>
<protein>
    <recommendedName>
        <fullName evidence="1">Fructose-1,6-bisphosphatase class 3</fullName>
        <shortName evidence="1">FBPase class 3</shortName>
        <ecNumber evidence="1">3.1.3.11</ecNumber>
    </recommendedName>
    <alternativeName>
        <fullName evidence="1">D-fructose-1,6-bisphosphate 1-phosphohydrolase class 3</fullName>
    </alternativeName>
</protein>
<keyword id="KW-0119">Carbohydrate metabolism</keyword>
<keyword id="KW-0378">Hydrolase</keyword>
<keyword id="KW-0464">Manganese</keyword>
<keyword id="KW-1185">Reference proteome</keyword>